<gene>
    <name type="ORF">ORF2/4</name>
</gene>
<organismHost>
    <name type="scientific">Homo sapiens</name>
    <name type="common">Human</name>
    <dbReference type="NCBI Taxonomy" id="9606"/>
</organismHost>
<organism>
    <name type="scientific">Torque teno virus (strain VT416)</name>
    <name type="common">TTV</name>
    <dbReference type="NCBI Taxonomy" id="486280"/>
    <lineage>
        <taxon>Viruses</taxon>
        <taxon>Viruses incertae sedis</taxon>
        <taxon>Anelloviridae</taxon>
        <taxon>Torque teno virus</taxon>
    </lineage>
</organism>
<reference key="1">
    <citation type="journal article" date="2000" name="J. Virol.">
        <title>Three spliced mRNAs of TT virus transcribed from a plasmid containing the entire genome in COS1 cells.</title>
        <authorList>
            <person name="Kamahora T."/>
            <person name="Hino S."/>
            <person name="Miyata H."/>
        </authorList>
    </citation>
    <scope>NUCLEOTIDE SEQUENCE [GENOMIC DNA / MRNA]</scope>
</reference>
<reference key="2">
    <citation type="journal article" date="2007" name="Rev. Med. Virol.">
        <title>Torque teno virus (TTV): current status.</title>
        <authorList>
            <person name="Hino S."/>
            <person name="Miyata H."/>
        </authorList>
    </citation>
    <scope>REVIEW</scope>
</reference>
<protein>
    <recommendedName>
        <fullName>Uncharacterized ORF2/4 protein</fullName>
    </recommendedName>
</protein>
<sequence length="290" mass="31265">MWTPPRNDQHYLNWQWYSSILSSHAAMCGCPDAVAHFNHLASVLRAPQNPPPPGPQRNLPLRRLPALPAAPEAPGDRAPWPMAGGAEGEDGGAGGDADHGGAAGGPEDADLLDAVAAAETRPQETQEGHRGVPLQPRRGAKRKLTFPPSQAPQTSPPVGRLAAGGKRVAKLRGRDTDRLPAAQAAAAATANPGSQTQTPLQPSPKNPTKSRYQPYLVTKGGGSSILISNSTINMFGDPKPYNPSSNDWKEEYEACRIWDRPPRGNLRDTPYYPWAPKENQYRVNFKLGFQ</sequence>
<name>ORF24_TTVV1</name>
<dbReference type="EMBL" id="AB041007">
    <property type="protein sequence ID" value="BAB15942.1"/>
    <property type="molecule type" value="Genomic_DNA"/>
</dbReference>
<dbReference type="EMBL" id="AB041823">
    <property type="protein sequence ID" value="BAB16836.1"/>
    <property type="molecule type" value="mRNA"/>
</dbReference>
<dbReference type="KEGG" id="vg:1449577"/>
<dbReference type="Proteomes" id="UP000001448">
    <property type="component" value="Segment"/>
</dbReference>
<dbReference type="InterPro" id="IPR004118">
    <property type="entry name" value="HEV_TT_vir_Orf2/Gyrovir_Vp2_N"/>
</dbReference>
<dbReference type="Pfam" id="PF02957">
    <property type="entry name" value="TT_ORF2-like"/>
    <property type="match status" value="1"/>
</dbReference>
<proteinExistence type="evidence at transcript level"/>
<accession>Q9DH22</accession>
<feature type="chain" id="PRO_0000315340" description="Uncharacterized ORF2/4 protein">
    <location>
        <begin position="1"/>
        <end position="290"/>
    </location>
</feature>
<feature type="region of interest" description="Disordered" evidence="1">
    <location>
        <begin position="67"/>
        <end position="210"/>
    </location>
</feature>
<feature type="compositionally biased region" description="Basic and acidic residues" evidence="1">
    <location>
        <begin position="121"/>
        <end position="130"/>
    </location>
</feature>
<feature type="compositionally biased region" description="Low complexity" evidence="1">
    <location>
        <begin position="181"/>
        <end position="190"/>
    </location>
</feature>
<feature type="compositionally biased region" description="Polar residues" evidence="1">
    <location>
        <begin position="191"/>
        <end position="200"/>
    </location>
</feature>
<evidence type="ECO:0000256" key="1">
    <source>
        <dbReference type="SAM" id="MobiDB-lite"/>
    </source>
</evidence>